<accession>Q5U584</accession>
<organism>
    <name type="scientific">Xenopus laevis</name>
    <name type="common">African clawed frog</name>
    <dbReference type="NCBI Taxonomy" id="8355"/>
    <lineage>
        <taxon>Eukaryota</taxon>
        <taxon>Metazoa</taxon>
        <taxon>Chordata</taxon>
        <taxon>Craniata</taxon>
        <taxon>Vertebrata</taxon>
        <taxon>Euteleostomi</taxon>
        <taxon>Amphibia</taxon>
        <taxon>Batrachia</taxon>
        <taxon>Anura</taxon>
        <taxon>Pipoidea</taxon>
        <taxon>Pipidae</taxon>
        <taxon>Xenopodinae</taxon>
        <taxon>Xenopus</taxon>
        <taxon>Xenopus</taxon>
    </lineage>
</organism>
<name>3BP5L_XENLA</name>
<gene>
    <name type="primary">sh3bp5l</name>
</gene>
<protein>
    <recommendedName>
        <fullName>SH3 domain-binding protein 5-like</fullName>
        <shortName>SH3BP-5-like</shortName>
    </recommendedName>
</protein>
<reference key="1">
    <citation type="submission" date="2004-10" db="EMBL/GenBank/DDBJ databases">
        <authorList>
            <consortium name="NIH - Xenopus Gene Collection (XGC) project"/>
        </authorList>
    </citation>
    <scope>NUCLEOTIDE SEQUENCE [LARGE SCALE MRNA]</scope>
    <source>
        <tissue>Brain</tissue>
    </source>
</reference>
<sequence>MEGKEGPPCEVRLPTPGAEREGPVHPELGAFGESASDAIKLSETSNDAKKEEIEEELDPRIQEELERLNQASEEINLLELQLDEARTAYRRILTESARRLNGLATQLGACIDKARPYYEARRLAKEAQQDTHSAALRYERAVSMHAAAREMVFVAEQGVTADKNRLDPTWQEMLNHATCKVNEAEEERLRSEFEHQRVTRLCHEAEAKVQTLQKSLKRLIIKSRPYFELKAQLNTILEEHKSRVTLLENSVAQAKLRYSGTLHNLEKISEEIHARRTQSSVLSQRAPPLGAEAPPSVKDGETGPPADTVSLLSLQTIASDLQKSDSVEHLRDLTDVTSLDGRETGAVESGGSRERGEDRGTGGAFRHHRSVSL</sequence>
<keyword id="KW-0175">Coiled coil</keyword>
<keyword id="KW-0344">Guanine-nucleotide releasing factor</keyword>
<keyword id="KW-1185">Reference proteome</keyword>
<dbReference type="EMBL" id="BC084800">
    <property type="protein sequence ID" value="AAH84800.1"/>
    <property type="molecule type" value="mRNA"/>
</dbReference>
<dbReference type="RefSeq" id="NP_001088473.1">
    <property type="nucleotide sequence ID" value="NM_001095004.1"/>
</dbReference>
<dbReference type="RefSeq" id="XP_018084601.1">
    <property type="nucleotide sequence ID" value="XM_018229112.1"/>
</dbReference>
<dbReference type="RefSeq" id="XP_018084602.1">
    <property type="nucleotide sequence ID" value="XM_018229113.1"/>
</dbReference>
<dbReference type="RefSeq" id="XP_018084603.1">
    <property type="nucleotide sequence ID" value="XM_018229114.1"/>
</dbReference>
<dbReference type="RefSeq" id="XP_018084604.1">
    <property type="nucleotide sequence ID" value="XM_018229115.1"/>
</dbReference>
<dbReference type="RefSeq" id="XP_018084605.1">
    <property type="nucleotide sequence ID" value="XM_018229116.1"/>
</dbReference>
<dbReference type="RefSeq" id="XP_018084606.1">
    <property type="nucleotide sequence ID" value="XM_018229117.1"/>
</dbReference>
<dbReference type="RefSeq" id="XP_018084607.1">
    <property type="nucleotide sequence ID" value="XM_018229118.1"/>
</dbReference>
<dbReference type="SMR" id="Q5U584"/>
<dbReference type="DNASU" id="495338"/>
<dbReference type="GeneID" id="495338"/>
<dbReference type="KEGG" id="xla:495338"/>
<dbReference type="AGR" id="Xenbase:XB-GENE-920572"/>
<dbReference type="CTD" id="495338"/>
<dbReference type="Xenbase" id="XB-GENE-920572">
    <property type="gene designation" value="sh3bp5l.L"/>
</dbReference>
<dbReference type="OMA" id="QISAEIH"/>
<dbReference type="OrthoDB" id="446789at2759"/>
<dbReference type="Proteomes" id="UP000186698">
    <property type="component" value="Chromosome 8L"/>
</dbReference>
<dbReference type="Bgee" id="495338">
    <property type="expression patterns" value="Expressed in muscle tissue and 19 other cell types or tissues"/>
</dbReference>
<dbReference type="GO" id="GO:0005737">
    <property type="term" value="C:cytoplasm"/>
    <property type="evidence" value="ECO:0000318"/>
    <property type="project" value="GO_Central"/>
</dbReference>
<dbReference type="GO" id="GO:0005085">
    <property type="term" value="F:guanyl-nucleotide exchange factor activity"/>
    <property type="evidence" value="ECO:0000250"/>
    <property type="project" value="UniProtKB"/>
</dbReference>
<dbReference type="GO" id="GO:0004860">
    <property type="term" value="F:protein kinase inhibitor activity"/>
    <property type="evidence" value="ECO:0000318"/>
    <property type="project" value="GO_Central"/>
</dbReference>
<dbReference type="GO" id="GO:0035556">
    <property type="term" value="P:intracellular signal transduction"/>
    <property type="evidence" value="ECO:0000318"/>
    <property type="project" value="GO_Central"/>
</dbReference>
<dbReference type="InterPro" id="IPR007940">
    <property type="entry name" value="SH3BP5"/>
</dbReference>
<dbReference type="PANTHER" id="PTHR19423">
    <property type="entry name" value="SH3 DOMAIN-BINDING PROTEIN 5"/>
    <property type="match status" value="1"/>
</dbReference>
<dbReference type="PANTHER" id="PTHR19423:SF8">
    <property type="entry name" value="SH3 DOMAIN-BINDING PROTEIN 5-LIKE"/>
    <property type="match status" value="1"/>
</dbReference>
<dbReference type="Pfam" id="PF05276">
    <property type="entry name" value="SH3BP5"/>
    <property type="match status" value="1"/>
</dbReference>
<feature type="chain" id="PRO_0000317511" description="SH3 domain-binding protein 5-like">
    <location>
        <begin position="1"/>
        <end position="373"/>
    </location>
</feature>
<feature type="region of interest" description="Disordered" evidence="3">
    <location>
        <begin position="1"/>
        <end position="36"/>
    </location>
</feature>
<feature type="region of interest" description="Disordered" evidence="3">
    <location>
        <begin position="274"/>
        <end position="308"/>
    </location>
</feature>
<feature type="region of interest" description="Disordered" evidence="3">
    <location>
        <begin position="332"/>
        <end position="373"/>
    </location>
</feature>
<feature type="coiled-coil region" evidence="2">
    <location>
        <begin position="35"/>
        <end position="98"/>
    </location>
</feature>
<feature type="coiled-coil region" evidence="2">
    <location>
        <begin position="170"/>
        <end position="258"/>
    </location>
</feature>
<feature type="compositionally biased region" description="Basic and acidic residues" evidence="3">
    <location>
        <begin position="332"/>
        <end position="360"/>
    </location>
</feature>
<comment type="function">
    <text evidence="1">Functions as a guanine nucleotide exchange factor (GEF) for rab11a.</text>
</comment>
<comment type="similarity">
    <text evidence="4">Belongs to the SH3BP5 family.</text>
</comment>
<proteinExistence type="evidence at transcript level"/>
<evidence type="ECO:0000250" key="1">
    <source>
        <dbReference type="UniProtKB" id="Q7L8J4"/>
    </source>
</evidence>
<evidence type="ECO:0000255" key="2"/>
<evidence type="ECO:0000256" key="3">
    <source>
        <dbReference type="SAM" id="MobiDB-lite"/>
    </source>
</evidence>
<evidence type="ECO:0000305" key="4"/>